<proteinExistence type="inferred from homology"/>
<comment type="function">
    <text evidence="1">Catalyzes the conversion of glucosamine-6-phosphate to glucosamine-1-phosphate.</text>
</comment>
<comment type="catalytic activity">
    <reaction evidence="1">
        <text>alpha-D-glucosamine 1-phosphate = D-glucosamine 6-phosphate</text>
        <dbReference type="Rhea" id="RHEA:23424"/>
        <dbReference type="ChEBI" id="CHEBI:58516"/>
        <dbReference type="ChEBI" id="CHEBI:58725"/>
        <dbReference type="EC" id="5.4.2.10"/>
    </reaction>
</comment>
<comment type="cofactor">
    <cofactor evidence="1">
        <name>Mg(2+)</name>
        <dbReference type="ChEBI" id="CHEBI:18420"/>
    </cofactor>
    <text evidence="1">Binds 1 Mg(2+) ion per subunit.</text>
</comment>
<comment type="PTM">
    <text evidence="1">Activated by phosphorylation.</text>
</comment>
<comment type="similarity">
    <text evidence="1">Belongs to the phosphohexose mutase family.</text>
</comment>
<reference key="1">
    <citation type="journal article" date="2005" name="Proc. Natl. Acad. Sci. U.S.A.">
        <title>Complete genome sequencing of Anaplasma marginale reveals that the surface is skewed to two superfamilies of outer membrane proteins.</title>
        <authorList>
            <person name="Brayton K.A."/>
            <person name="Kappmeyer L.S."/>
            <person name="Herndon D.R."/>
            <person name="Dark M.J."/>
            <person name="Tibbals D.L."/>
            <person name="Palmer G.H."/>
            <person name="McGuire T.C."/>
            <person name="Knowles D.P. Jr."/>
        </authorList>
    </citation>
    <scope>NUCLEOTIDE SEQUENCE [LARGE SCALE GENOMIC DNA]</scope>
    <source>
        <strain>St. Maries</strain>
    </source>
</reference>
<gene>
    <name evidence="1" type="primary">glmM</name>
    <name type="ordered locus">AM940</name>
</gene>
<evidence type="ECO:0000255" key="1">
    <source>
        <dbReference type="HAMAP-Rule" id="MF_01554"/>
    </source>
</evidence>
<dbReference type="EC" id="5.4.2.10" evidence="1"/>
<dbReference type="EMBL" id="CP000030">
    <property type="protein sequence ID" value="AAV86846.1"/>
    <property type="molecule type" value="Genomic_DNA"/>
</dbReference>
<dbReference type="RefSeq" id="WP_011114509.1">
    <property type="nucleotide sequence ID" value="NZ_AFMU01000010.1"/>
</dbReference>
<dbReference type="SMR" id="Q5PA34"/>
<dbReference type="KEGG" id="ama:AM940"/>
<dbReference type="HOGENOM" id="CLU_016950_7_0_5"/>
<dbReference type="GO" id="GO:0005829">
    <property type="term" value="C:cytosol"/>
    <property type="evidence" value="ECO:0007669"/>
    <property type="project" value="TreeGrafter"/>
</dbReference>
<dbReference type="GO" id="GO:0000287">
    <property type="term" value="F:magnesium ion binding"/>
    <property type="evidence" value="ECO:0007669"/>
    <property type="project" value="UniProtKB-UniRule"/>
</dbReference>
<dbReference type="GO" id="GO:0008966">
    <property type="term" value="F:phosphoglucosamine mutase activity"/>
    <property type="evidence" value="ECO:0007669"/>
    <property type="project" value="UniProtKB-UniRule"/>
</dbReference>
<dbReference type="GO" id="GO:0004615">
    <property type="term" value="F:phosphomannomutase activity"/>
    <property type="evidence" value="ECO:0007669"/>
    <property type="project" value="TreeGrafter"/>
</dbReference>
<dbReference type="GO" id="GO:0005975">
    <property type="term" value="P:carbohydrate metabolic process"/>
    <property type="evidence" value="ECO:0007669"/>
    <property type="project" value="InterPro"/>
</dbReference>
<dbReference type="GO" id="GO:0009252">
    <property type="term" value="P:peptidoglycan biosynthetic process"/>
    <property type="evidence" value="ECO:0007669"/>
    <property type="project" value="TreeGrafter"/>
</dbReference>
<dbReference type="GO" id="GO:0006048">
    <property type="term" value="P:UDP-N-acetylglucosamine biosynthetic process"/>
    <property type="evidence" value="ECO:0007669"/>
    <property type="project" value="TreeGrafter"/>
</dbReference>
<dbReference type="CDD" id="cd05802">
    <property type="entry name" value="GlmM"/>
    <property type="match status" value="1"/>
</dbReference>
<dbReference type="FunFam" id="3.40.120.10:FF:000001">
    <property type="entry name" value="Phosphoglucosamine mutase"/>
    <property type="match status" value="1"/>
</dbReference>
<dbReference type="FunFam" id="3.40.120.10:FF:000003">
    <property type="entry name" value="Phosphoglucosamine mutase"/>
    <property type="match status" value="1"/>
</dbReference>
<dbReference type="Gene3D" id="3.40.120.10">
    <property type="entry name" value="Alpha-D-Glucose-1,6-Bisphosphate, subunit A, domain 3"/>
    <property type="match status" value="3"/>
</dbReference>
<dbReference type="Gene3D" id="3.30.310.50">
    <property type="entry name" value="Alpha-D-phosphohexomutase, C-terminal domain"/>
    <property type="match status" value="1"/>
</dbReference>
<dbReference type="HAMAP" id="MF_01554_B">
    <property type="entry name" value="GlmM_B"/>
    <property type="match status" value="1"/>
</dbReference>
<dbReference type="InterPro" id="IPR005844">
    <property type="entry name" value="A-D-PHexomutase_a/b/a-I"/>
</dbReference>
<dbReference type="InterPro" id="IPR016055">
    <property type="entry name" value="A-D-PHexomutase_a/b/a-I/II/III"/>
</dbReference>
<dbReference type="InterPro" id="IPR005845">
    <property type="entry name" value="A-D-PHexomutase_a/b/a-II"/>
</dbReference>
<dbReference type="InterPro" id="IPR005846">
    <property type="entry name" value="A-D-PHexomutase_a/b/a-III"/>
</dbReference>
<dbReference type="InterPro" id="IPR005843">
    <property type="entry name" value="A-D-PHexomutase_C"/>
</dbReference>
<dbReference type="InterPro" id="IPR036900">
    <property type="entry name" value="A-D-PHexomutase_C_sf"/>
</dbReference>
<dbReference type="InterPro" id="IPR005841">
    <property type="entry name" value="Alpha-D-phosphohexomutase_SF"/>
</dbReference>
<dbReference type="InterPro" id="IPR006352">
    <property type="entry name" value="GlmM_bact"/>
</dbReference>
<dbReference type="InterPro" id="IPR050060">
    <property type="entry name" value="Phosphoglucosamine_mutase"/>
</dbReference>
<dbReference type="NCBIfam" id="TIGR01455">
    <property type="entry name" value="glmM"/>
    <property type="match status" value="1"/>
</dbReference>
<dbReference type="PANTHER" id="PTHR42946:SF1">
    <property type="entry name" value="PHOSPHOGLUCOMUTASE (ALPHA-D-GLUCOSE-1,6-BISPHOSPHATE-DEPENDENT)"/>
    <property type="match status" value="1"/>
</dbReference>
<dbReference type="PANTHER" id="PTHR42946">
    <property type="entry name" value="PHOSPHOHEXOSE MUTASE"/>
    <property type="match status" value="1"/>
</dbReference>
<dbReference type="Pfam" id="PF02878">
    <property type="entry name" value="PGM_PMM_I"/>
    <property type="match status" value="1"/>
</dbReference>
<dbReference type="Pfam" id="PF02879">
    <property type="entry name" value="PGM_PMM_II"/>
    <property type="match status" value="1"/>
</dbReference>
<dbReference type="Pfam" id="PF02880">
    <property type="entry name" value="PGM_PMM_III"/>
    <property type="match status" value="1"/>
</dbReference>
<dbReference type="Pfam" id="PF00408">
    <property type="entry name" value="PGM_PMM_IV"/>
    <property type="match status" value="1"/>
</dbReference>
<dbReference type="PRINTS" id="PR00509">
    <property type="entry name" value="PGMPMM"/>
</dbReference>
<dbReference type="SUPFAM" id="SSF55957">
    <property type="entry name" value="Phosphoglucomutase, C-terminal domain"/>
    <property type="match status" value="1"/>
</dbReference>
<dbReference type="SUPFAM" id="SSF53738">
    <property type="entry name" value="Phosphoglucomutase, first 3 domains"/>
    <property type="match status" value="3"/>
</dbReference>
<keyword id="KW-0413">Isomerase</keyword>
<keyword id="KW-0460">Magnesium</keyword>
<keyword id="KW-0479">Metal-binding</keyword>
<keyword id="KW-0597">Phosphoprotein</keyword>
<accession>Q5PA34</accession>
<sequence length="452" mass="48828">MNIFGTDGVRGRANVYPMDPITVLRLGMAIGLEARKVGTQVVLGKDTRISGYMVESALVSGLVAMGVNVGLLGPMPTAAIATLVRNLRASMGVVISASHNSYLDNGVKIFDSEGIKIPLELEEVLESNVRAELSSDLAQVRGMGKVYRIAGAVGRYIEFVKGTFPKRLKLSGMKIVVDCANGAAYHIGGEVFWELGADVVVIGNKPDGLNINHNCGSLHPEGMVQKVLEEGADIGIALDGDADRVVVCDEKGRLVDGDQVIASIMRHLRATKSITDAAVTTMSSKSIDSYARELGVRLHRSEVGDRHLVDTMRRHSCSVGGEKSGHIILWEHSTTSDSLVAALQILSIMLLENKSASSIFGDFVPMPRVHRDIPYSMEFDHIARLIGPTLSDVEQALGRVNGRVIFRRSGTERLIRCVIEGEDPKLVALVADELSIKLRELGVENGVEPEMQ</sequence>
<organism>
    <name type="scientific">Anaplasma marginale (strain St. Maries)</name>
    <dbReference type="NCBI Taxonomy" id="234826"/>
    <lineage>
        <taxon>Bacteria</taxon>
        <taxon>Pseudomonadati</taxon>
        <taxon>Pseudomonadota</taxon>
        <taxon>Alphaproteobacteria</taxon>
        <taxon>Rickettsiales</taxon>
        <taxon>Anaplasmataceae</taxon>
        <taxon>Anaplasma</taxon>
    </lineage>
</organism>
<feature type="chain" id="PRO_0000147837" description="Phosphoglucosamine mutase">
    <location>
        <begin position="1"/>
        <end position="452"/>
    </location>
</feature>
<feature type="active site" description="Phosphoserine intermediate" evidence="1">
    <location>
        <position position="98"/>
    </location>
</feature>
<feature type="binding site" description="via phosphate group" evidence="1">
    <location>
        <position position="98"/>
    </location>
    <ligand>
        <name>Mg(2+)</name>
        <dbReference type="ChEBI" id="CHEBI:18420"/>
    </ligand>
</feature>
<feature type="binding site" evidence="1">
    <location>
        <position position="239"/>
    </location>
    <ligand>
        <name>Mg(2+)</name>
        <dbReference type="ChEBI" id="CHEBI:18420"/>
    </ligand>
</feature>
<feature type="binding site" evidence="1">
    <location>
        <position position="241"/>
    </location>
    <ligand>
        <name>Mg(2+)</name>
        <dbReference type="ChEBI" id="CHEBI:18420"/>
    </ligand>
</feature>
<feature type="binding site" evidence="1">
    <location>
        <position position="243"/>
    </location>
    <ligand>
        <name>Mg(2+)</name>
        <dbReference type="ChEBI" id="CHEBI:18420"/>
    </ligand>
</feature>
<feature type="modified residue" description="Phosphoserine" evidence="1">
    <location>
        <position position="98"/>
    </location>
</feature>
<protein>
    <recommendedName>
        <fullName evidence="1">Phosphoglucosamine mutase</fullName>
        <ecNumber evidence="1">5.4.2.10</ecNumber>
    </recommendedName>
</protein>
<name>GLMM_ANAMM</name>